<evidence type="ECO:0000255" key="1">
    <source>
        <dbReference type="HAMAP-Rule" id="MF_01416"/>
    </source>
</evidence>
<reference key="1">
    <citation type="journal article" date="2008" name="Foodborne Pathog. Dis.">
        <title>The complete genome sequence and analysis of the human pathogen Campylobacter lari.</title>
        <authorList>
            <person name="Miller W.G."/>
            <person name="Wang G."/>
            <person name="Binnewies T.T."/>
            <person name="Parker C.T."/>
        </authorList>
    </citation>
    <scope>NUCLEOTIDE SEQUENCE [LARGE SCALE GENOMIC DNA]</scope>
    <source>
        <strain>RM2100 / D67 / ATCC BAA-1060</strain>
    </source>
</reference>
<keyword id="KW-0066">ATP synthesis</keyword>
<keyword id="KW-0997">Cell inner membrane</keyword>
<keyword id="KW-1003">Cell membrane</keyword>
<keyword id="KW-0139">CF(1)</keyword>
<keyword id="KW-0375">Hydrogen ion transport</keyword>
<keyword id="KW-0406">Ion transport</keyword>
<keyword id="KW-0472">Membrane</keyword>
<keyword id="KW-1185">Reference proteome</keyword>
<keyword id="KW-0813">Transport</keyword>
<accession>B9KES0</accession>
<name>ATPD_CAMLR</name>
<protein>
    <recommendedName>
        <fullName evidence="1">ATP synthase subunit delta</fullName>
    </recommendedName>
    <alternativeName>
        <fullName evidence="1">ATP synthase F(1) sector subunit delta</fullName>
    </alternativeName>
    <alternativeName>
        <fullName evidence="1">F-type ATPase subunit delta</fullName>
        <shortName evidence="1">F-ATPase subunit delta</shortName>
    </alternativeName>
</protein>
<gene>
    <name evidence="1" type="primary">atpH</name>
    <name type="ordered locus">Cla_0192</name>
</gene>
<sequence length="173" mass="19934">MEKVIAKTYAKAILERNDFENFYSNLLELSSAFASNKFIDILNSYEIKQDKKLELILSLLDNPSDAFKNFINLIVDNKREMLIPEITKELSEQKASKENTFLGQVYSKEKLSEEEIKNLEEKLSLKFNAKIRLDSKISDNDSVKISLDGLGYEISFSMQSLKAKMNEYILKAI</sequence>
<feature type="chain" id="PRO_0000382078" description="ATP synthase subunit delta">
    <location>
        <begin position="1"/>
        <end position="173"/>
    </location>
</feature>
<dbReference type="EMBL" id="CP000932">
    <property type="protein sequence ID" value="ACM63555.1"/>
    <property type="molecule type" value="Genomic_DNA"/>
</dbReference>
<dbReference type="RefSeq" id="WP_012660939.1">
    <property type="nucleotide sequence ID" value="NC_012039.1"/>
</dbReference>
<dbReference type="SMR" id="B9KES0"/>
<dbReference type="STRING" id="306263.Cla_0192"/>
<dbReference type="KEGG" id="cla:CLA_0192"/>
<dbReference type="PATRIC" id="fig|306263.5.peg.191"/>
<dbReference type="eggNOG" id="COG0712">
    <property type="taxonomic scope" value="Bacteria"/>
</dbReference>
<dbReference type="HOGENOM" id="CLU_085114_3_1_7"/>
<dbReference type="Proteomes" id="UP000007727">
    <property type="component" value="Chromosome"/>
</dbReference>
<dbReference type="GO" id="GO:0005886">
    <property type="term" value="C:plasma membrane"/>
    <property type="evidence" value="ECO:0007669"/>
    <property type="project" value="UniProtKB-SubCell"/>
</dbReference>
<dbReference type="GO" id="GO:0045259">
    <property type="term" value="C:proton-transporting ATP synthase complex"/>
    <property type="evidence" value="ECO:0007669"/>
    <property type="project" value="UniProtKB-KW"/>
</dbReference>
<dbReference type="GO" id="GO:0046933">
    <property type="term" value="F:proton-transporting ATP synthase activity, rotational mechanism"/>
    <property type="evidence" value="ECO:0007669"/>
    <property type="project" value="UniProtKB-UniRule"/>
</dbReference>
<dbReference type="Gene3D" id="1.10.520.20">
    <property type="entry name" value="N-terminal domain of the delta subunit of the F1F0-ATP synthase"/>
    <property type="match status" value="1"/>
</dbReference>
<dbReference type="HAMAP" id="MF_01416">
    <property type="entry name" value="ATP_synth_delta_bact"/>
    <property type="match status" value="1"/>
</dbReference>
<dbReference type="InterPro" id="IPR026015">
    <property type="entry name" value="ATP_synth_OSCP/delta_N_sf"/>
</dbReference>
<dbReference type="InterPro" id="IPR000711">
    <property type="entry name" value="ATPase_OSCP/dsu"/>
</dbReference>
<dbReference type="NCBIfam" id="NF006291">
    <property type="entry name" value="PRK08474.1"/>
    <property type="match status" value="1"/>
</dbReference>
<dbReference type="PANTHER" id="PTHR11910">
    <property type="entry name" value="ATP SYNTHASE DELTA CHAIN"/>
    <property type="match status" value="1"/>
</dbReference>
<dbReference type="Pfam" id="PF00213">
    <property type="entry name" value="OSCP"/>
    <property type="match status" value="1"/>
</dbReference>
<dbReference type="SUPFAM" id="SSF47928">
    <property type="entry name" value="N-terminal domain of the delta subunit of the F1F0-ATP synthase"/>
    <property type="match status" value="1"/>
</dbReference>
<proteinExistence type="inferred from homology"/>
<organism>
    <name type="scientific">Campylobacter lari (strain RM2100 / D67 / ATCC BAA-1060)</name>
    <dbReference type="NCBI Taxonomy" id="306263"/>
    <lineage>
        <taxon>Bacteria</taxon>
        <taxon>Pseudomonadati</taxon>
        <taxon>Campylobacterota</taxon>
        <taxon>Epsilonproteobacteria</taxon>
        <taxon>Campylobacterales</taxon>
        <taxon>Campylobacteraceae</taxon>
        <taxon>Campylobacter</taxon>
    </lineage>
</organism>
<comment type="function">
    <text evidence="1">F(1)F(0) ATP synthase produces ATP from ADP in the presence of a proton or sodium gradient. F-type ATPases consist of two structural domains, F(1) containing the extramembraneous catalytic core and F(0) containing the membrane proton channel, linked together by a central stalk and a peripheral stalk. During catalysis, ATP synthesis in the catalytic domain of F(1) is coupled via a rotary mechanism of the central stalk subunits to proton translocation.</text>
</comment>
<comment type="function">
    <text evidence="1">This protein is part of the stalk that links CF(0) to CF(1). It either transmits conformational changes from CF(0) to CF(1) or is implicated in proton conduction.</text>
</comment>
<comment type="subunit">
    <text evidence="1">F-type ATPases have 2 components, F(1) - the catalytic core - and F(0) - the membrane proton channel. F(1) has five subunits: alpha(3), beta(3), gamma(1), delta(1), epsilon(1). F(0) has three main subunits: a(1), b(2) and c(10-14). The alpha and beta chains form an alternating ring which encloses part of the gamma chain. F(1) is attached to F(0) by a central stalk formed by the gamma and epsilon chains, while a peripheral stalk is formed by the delta and b chains.</text>
</comment>
<comment type="subcellular location">
    <subcellularLocation>
        <location evidence="1">Cell inner membrane</location>
        <topology evidence="1">Peripheral membrane protein</topology>
    </subcellularLocation>
</comment>
<comment type="similarity">
    <text evidence="1">Belongs to the ATPase delta chain family.</text>
</comment>